<keyword id="KW-0002">3D-structure</keyword>
<keyword id="KW-1064">Adaptive immunity</keyword>
<keyword id="KW-0086">Bence-Jones protein</keyword>
<keyword id="KW-1003">Cell membrane</keyword>
<keyword id="KW-0903">Direct protein sequencing</keyword>
<keyword id="KW-1015">Disulfide bond</keyword>
<keyword id="KW-0391">Immunity</keyword>
<keyword id="KW-1280">Immunoglobulin</keyword>
<keyword id="KW-0393">Immunoglobulin domain</keyword>
<keyword id="KW-0472">Membrane</keyword>
<keyword id="KW-1267">Proteomics identification</keyword>
<keyword id="KW-1185">Reference proteome</keyword>
<keyword id="KW-0964">Secreted</keyword>
<name>IGLC3_HUMAN</name>
<feature type="chain" id="PRO_0000394666" description="Immunoglobulin lambda constant 3">
    <location>
        <begin position="1" status="less than"/>
        <end position="106"/>
    </location>
</feature>
<feature type="domain" description="Ig-like" evidence="1">
    <location>
        <begin position="7"/>
        <end position="101"/>
    </location>
</feature>
<feature type="disulfide bond" evidence="1">
    <location>
        <begin position="28"/>
        <end position="87"/>
    </location>
</feature>
<feature type="disulfide bond" description="Interchain (with heavy chain)">
    <location>
        <position position="105"/>
    </location>
</feature>
<feature type="sequence variant" id="VAR_077897" description="In IMGT allele IGLC3*04.">
    <original>K</original>
    <variation>R</variation>
    <location>
        <position position="83"/>
    </location>
</feature>
<feature type="non-terminal residue">
    <location>
        <position position="1"/>
    </location>
</feature>
<feature type="strand" evidence="11">
    <location>
        <begin position="8"/>
        <end position="12"/>
    </location>
</feature>
<feature type="helix" evidence="11">
    <location>
        <begin position="16"/>
        <end position="20"/>
    </location>
</feature>
<feature type="strand" evidence="11">
    <location>
        <begin position="24"/>
        <end position="36"/>
    </location>
</feature>
<feature type="strand" evidence="11">
    <location>
        <begin position="39"/>
        <end position="44"/>
    </location>
</feature>
<feature type="strand" evidence="11">
    <location>
        <begin position="47"/>
        <end position="49"/>
    </location>
</feature>
<feature type="strand" evidence="11">
    <location>
        <begin position="53"/>
        <end position="55"/>
    </location>
</feature>
<feature type="strand" evidence="11">
    <location>
        <begin position="64"/>
        <end position="74"/>
    </location>
</feature>
<feature type="helix" evidence="11">
    <location>
        <begin position="76"/>
        <end position="81"/>
    </location>
</feature>
<feature type="strand" evidence="11">
    <location>
        <begin position="85"/>
        <end position="91"/>
    </location>
</feature>
<feature type="strand" evidence="11">
    <location>
        <begin position="94"/>
        <end position="100"/>
    </location>
</feature>
<sequence>GQPKAAPSVTLFPPSSEELQANKATLVCLISDFYPGAVTVAWKADSSPVKAGVETTTPSKQSNNKYAASSYLSLTPEQWKSHKSYSCQVTHEGSTVEKTVAPTECS</sequence>
<comment type="function">
    <text evidence="3 4 5">Constant region of immunoglobulin light chains. Immunoglobulins, also known as antibodies, are membrane-bound or secreted glycoproteins produced by B lymphocytes. In the recognition phase of humoral immunity, the membrane-bound immunoglobulins serve as receptors which, upon binding of a specific antigen, trigger the clonal expansion and differentiation of B lymphocytes into immunoglobulins-secreting plasma cells. Secreted immunoglobulins mediate the effector phase of humoral immunity, which results in the elimination of bound antigens (PubMed:20176268, PubMed:22158414). The antigen binding site is formed by the variable domain of one heavy chain, together with that of its associated light chain. Thus, each immunoglobulin has two antigen binding sites with remarkable affinity for a particular antigen. The variable domains are assembled by a process called V-(D)-J rearrangement and can then be subjected to somatic hypermutations which, after exposure to antigen and selection, allow affinity maturation for a particular antigen (PubMed:17576170, PubMed:20176268).</text>
</comment>
<comment type="subunit">
    <text evidence="4">Immunoglobulins are composed of two identical heavy chains and two identical light chains; disulfide-linked.</text>
</comment>
<comment type="subcellular location">
    <subcellularLocation>
        <location evidence="4 5">Secreted</location>
    </subcellularLocation>
    <subcellularLocation>
        <location evidence="4 5">Cell membrane</location>
    </subcellularLocation>
</comment>
<comment type="polymorphism">
    <text evidence="8">There are several alleles. The sequence shown is that of IMGT allele IGLC3*03.</text>
</comment>
<comment type="miscellaneous">
    <text evidence="6">Alleles IGLC3*01, IGLC3*02, and IGLC3*03 display the following serological isotype: Mcg-, Kern- and Oz+. The Mcg-isotype marker is characterized by Ala-6, Ser-8 and Thr-57; the Ke- marker by Ser-46 and the Oz+ marker by Lys-83. Allele IGLC3*04 displays the following serological isotype: Mcg-, Kern- and Oz-. The Mcg- isotype marker is characterized by Ala-6, Ser-8 and Thr-57; the Ke- marker by Ser-46 and the Oz- marker by Arg-83.</text>
</comment>
<comment type="caution">
    <text evidence="8">For an example of a full-length immunoglobulin lambda light chain see AC P0DOX8.</text>
</comment>
<comment type="sequence caution" evidence="8">
    <conflict type="erroneous initiation">
        <sequence resource="EMBL-CDS" id="AAA59109"/>
    </conflict>
    <text>Truncated N-terminus.</text>
</comment>
<comment type="sequence caution" evidence="8">
    <conflict type="erroneous initiation">
        <sequence resource="EMBL-CDS" id="AAB36581"/>
    </conflict>
    <text>Extended N-terminus.</text>
</comment>
<comment type="sequence caution" evidence="8">
    <conflict type="erroneous initiation">
        <sequence resource="EMBL-CDS" id="BAA20015"/>
    </conflict>
    <text>Truncated N-terminus.</text>
</comment>
<comment type="sequence caution" evidence="8">
    <conflict type="erroneous initiation">
        <sequence resource="EMBL-CDS" id="BAA20028"/>
    </conflict>
    <text>Truncated N-terminus.</text>
</comment>
<comment type="sequence caution" evidence="8">
    <conflict type="erroneous initiation">
        <sequence resource="EMBL-CDS" id="CAA36051"/>
    </conflict>
    <text>Truncated N-terminus.</text>
</comment>
<dbReference type="EMBL" id="J00254">
    <property type="protein sequence ID" value="AAA59109.1"/>
    <property type="status" value="ALT_INIT"/>
    <property type="molecule type" value="Genomic_DNA"/>
</dbReference>
<dbReference type="EMBL" id="X51755">
    <property type="protein sequence ID" value="CAA36051.1"/>
    <property type="status" value="ALT_INIT"/>
    <property type="molecule type" value="Genomic_DNA"/>
</dbReference>
<dbReference type="EMBL" id="L38562">
    <property type="protein sequence ID" value="AAB36581.1"/>
    <property type="status" value="ALT_INIT"/>
    <property type="molecule type" value="mRNA"/>
</dbReference>
<dbReference type="EMBL" id="D87017">
    <property type="protein sequence ID" value="BAA20015.1"/>
    <property type="status" value="ALT_INIT"/>
    <property type="molecule type" value="Genomic_DNA"/>
</dbReference>
<dbReference type="EMBL" id="D87023">
    <property type="protein sequence ID" value="BAA20028.1"/>
    <property type="status" value="ALT_INIT"/>
    <property type="molecule type" value="Genomic_DNA"/>
</dbReference>
<dbReference type="EMBL" id="AC245028">
    <property type="status" value="NOT_ANNOTATED_CDS"/>
    <property type="molecule type" value="Genomic_DNA"/>
</dbReference>
<dbReference type="PIR" id="A92057">
    <property type="entry name" value="L2HU"/>
</dbReference>
<dbReference type="PDB" id="1AQK">
    <property type="method" value="X-ray"/>
    <property type="resolution" value="1.84 A"/>
    <property type="chains" value="L=1-106"/>
</dbReference>
<dbReference type="PDB" id="4O5L">
    <property type="method" value="X-ray"/>
    <property type="resolution" value="1.50 A"/>
    <property type="chains" value="L=1-106"/>
</dbReference>
<dbReference type="PDB" id="4R26">
    <property type="method" value="X-ray"/>
    <property type="resolution" value="2.50 A"/>
    <property type="chains" value="L=2-106"/>
</dbReference>
<dbReference type="PDB" id="4R2G">
    <property type="method" value="X-ray"/>
    <property type="resolution" value="3.28 A"/>
    <property type="chains" value="C/I/M/P=1-106"/>
</dbReference>
<dbReference type="PDB" id="7FAB">
    <property type="method" value="X-ray"/>
    <property type="resolution" value="2.00 A"/>
    <property type="chains" value="L=2-106"/>
</dbReference>
<dbReference type="PDB" id="8XLB">
    <property type="method" value="NMR"/>
    <property type="chains" value="A=2-102"/>
</dbReference>
<dbReference type="PDBsum" id="1AQK"/>
<dbReference type="PDBsum" id="4O5L"/>
<dbReference type="PDBsum" id="4R26"/>
<dbReference type="PDBsum" id="4R2G"/>
<dbReference type="PDBsum" id="7FAB"/>
<dbReference type="PDBsum" id="8XLB"/>
<dbReference type="SMR" id="P0DOY3"/>
<dbReference type="ComplexPortal" id="CPX-6908">
    <property type="entry name" value="IgD - Ig lambda 3 immunoglobulin complex, constant regions"/>
</dbReference>
<dbReference type="ComplexPortal" id="CPX-6925">
    <property type="entry name" value="IgM - Ig lambda 3 immunoglobulin complex, constant regions"/>
</dbReference>
<dbReference type="ComplexPortal" id="CPX-6933">
    <property type="entry name" value="IgG1 - Ig lambda 3 immunoglobulin complex, constant regions"/>
</dbReference>
<dbReference type="ComplexPortal" id="CPX-6940">
    <property type="entry name" value="IgG2 - Ig lambda 3 immunoglobulin complex, constant regions"/>
</dbReference>
<dbReference type="ComplexPortal" id="CPX-6946">
    <property type="entry name" value="IgG3 - Ig lambda 3 immunoglobulin complex, constant regions"/>
</dbReference>
<dbReference type="ComplexPortal" id="CPX-6952">
    <property type="entry name" value="IgG4 - Ig lambda 3 immunoglobulin complex, constant regions"/>
</dbReference>
<dbReference type="ComplexPortal" id="CPX-6959">
    <property type="entry name" value="IgA1 - Ig lambda 3 immunoglobulin complex, constant regions"/>
</dbReference>
<dbReference type="ComplexPortal" id="CPX-6965">
    <property type="entry name" value="IgA2 - Ig lambda 3 immunoglobulin complex, constant regions"/>
</dbReference>
<dbReference type="ComplexPortal" id="CPX-6972">
    <property type="entry name" value="IgE - Ig lambda 3 immunoglobulin complex, constant regions"/>
</dbReference>
<dbReference type="FunCoup" id="P0DOY3">
    <property type="interactions" value="253"/>
</dbReference>
<dbReference type="IntAct" id="P0DOY3">
    <property type="interactions" value="2"/>
</dbReference>
<dbReference type="IMGT_GENE-DB" id="IGLC3"/>
<dbReference type="GlyGen" id="P0DOY3">
    <property type="glycosylation" value="1 site"/>
</dbReference>
<dbReference type="BioMuta" id="IGLC3"/>
<dbReference type="jPOST" id="P0DOY3"/>
<dbReference type="MassIVE" id="P0DOY3"/>
<dbReference type="PeptideAtlas" id="P0DOY3"/>
<dbReference type="PRIDE" id="P0DOY3"/>
<dbReference type="Pumba" id="P0DOY3"/>
<dbReference type="Ensembl" id="ENST00000390325.2">
    <property type="protein sequence ID" value="ENSP00000374857.2"/>
    <property type="gene ID" value="ENSG00000211679.2"/>
</dbReference>
<dbReference type="AGR" id="HGNC:5857"/>
<dbReference type="GeneCards" id="IGLC3"/>
<dbReference type="HGNC" id="HGNC:5857">
    <property type="gene designation" value="IGLC3"/>
</dbReference>
<dbReference type="HPA" id="ENSG00000211679">
    <property type="expression patterns" value="Tissue enhanced (intestine, lymphoid tissue, stomach, urinary bladder)"/>
</dbReference>
<dbReference type="neXtProt" id="NX_P0DOY3"/>
<dbReference type="VEuPathDB" id="HostDB:ENSG00000211679"/>
<dbReference type="InParanoid" id="P0DOY3"/>
<dbReference type="OrthoDB" id="9049585at2759"/>
<dbReference type="PAN-GO" id="P0DOY3">
    <property type="GO annotations" value="11 GO annotations based on evolutionary models"/>
</dbReference>
<dbReference type="PathwayCommons" id="P0DOY3"/>
<dbReference type="Reactome" id="R-HSA-166663">
    <property type="pathway name" value="Initial triggering of complement"/>
</dbReference>
<dbReference type="Reactome" id="R-HSA-173623">
    <property type="pathway name" value="Classical antibody-mediated complement activation"/>
</dbReference>
<dbReference type="Reactome" id="R-HSA-198933">
    <property type="pathway name" value="Immunoregulatory interactions between a Lymphoid and a non-Lymphoid cell"/>
</dbReference>
<dbReference type="Reactome" id="R-HSA-202733">
    <property type="pathway name" value="Cell surface interactions at the vascular wall"/>
</dbReference>
<dbReference type="Reactome" id="R-HSA-2029481">
    <property type="pathway name" value="FCGR activation"/>
</dbReference>
<dbReference type="Reactome" id="R-HSA-2029482">
    <property type="pathway name" value="Regulation of actin dynamics for phagocytic cup formation"/>
</dbReference>
<dbReference type="Reactome" id="R-HSA-2029485">
    <property type="pathway name" value="Role of phospholipids in phagocytosis"/>
</dbReference>
<dbReference type="Reactome" id="R-HSA-2168880">
    <property type="pathway name" value="Scavenging of heme from plasma"/>
</dbReference>
<dbReference type="Reactome" id="R-HSA-2454202">
    <property type="pathway name" value="Fc epsilon receptor (FCERI) signaling"/>
</dbReference>
<dbReference type="Reactome" id="R-HSA-2730905">
    <property type="pathway name" value="Role of LAT2/NTAL/LAB on calcium mobilization"/>
</dbReference>
<dbReference type="Reactome" id="R-HSA-2871796">
    <property type="pathway name" value="FCERI mediated MAPK activation"/>
</dbReference>
<dbReference type="Reactome" id="R-HSA-2871809">
    <property type="pathway name" value="FCERI mediated Ca+2 mobilization"/>
</dbReference>
<dbReference type="Reactome" id="R-HSA-2871837">
    <property type="pathway name" value="FCERI mediated NF-kB activation"/>
</dbReference>
<dbReference type="Reactome" id="R-HSA-5690714">
    <property type="pathway name" value="CD22 mediated BCR regulation"/>
</dbReference>
<dbReference type="Reactome" id="R-HSA-9664323">
    <property type="pathway name" value="FCGR3A-mediated IL10 synthesis"/>
</dbReference>
<dbReference type="Reactome" id="R-HSA-9664422">
    <property type="pathway name" value="FCGR3A-mediated phagocytosis"/>
</dbReference>
<dbReference type="Reactome" id="R-HSA-9679191">
    <property type="pathway name" value="Potential therapeutics for SARS"/>
</dbReference>
<dbReference type="Reactome" id="R-HSA-977606">
    <property type="pathway name" value="Regulation of Complement cascade"/>
</dbReference>
<dbReference type="Reactome" id="R-HSA-983695">
    <property type="pathway name" value="Antigen activates B Cell Receptor (BCR) leading to generation of second messengers"/>
</dbReference>
<dbReference type="SignaLink" id="P0DOY3"/>
<dbReference type="CD-CODE" id="232F8A39">
    <property type="entry name" value="P-body"/>
</dbReference>
<dbReference type="ChiTaRS" id="IGLC3">
    <property type="organism name" value="human"/>
</dbReference>
<dbReference type="EvolutionaryTrace" id="P0DOY3"/>
<dbReference type="Pharos" id="P0DOY3">
    <property type="development level" value="Tdark"/>
</dbReference>
<dbReference type="PRO" id="PR:P0DOY3"/>
<dbReference type="Proteomes" id="UP000005640">
    <property type="component" value="Chromosome 22"/>
</dbReference>
<dbReference type="RNAct" id="P0DOY3">
    <property type="molecule type" value="protein"/>
</dbReference>
<dbReference type="Bgee" id="ENSG00000211679">
    <property type="expression patterns" value="Expressed in duodenum and 93 other cell types or tissues"/>
</dbReference>
<dbReference type="GO" id="GO:0072562">
    <property type="term" value="C:blood microparticle"/>
    <property type="evidence" value="ECO:0007005"/>
    <property type="project" value="UniProtKB"/>
</dbReference>
<dbReference type="GO" id="GO:0070062">
    <property type="term" value="C:extracellular exosome"/>
    <property type="evidence" value="ECO:0007005"/>
    <property type="project" value="UniProtKB"/>
</dbReference>
<dbReference type="GO" id="GO:0005576">
    <property type="term" value="C:extracellular region"/>
    <property type="evidence" value="ECO:0000304"/>
    <property type="project" value="Reactome"/>
</dbReference>
<dbReference type="GO" id="GO:0005615">
    <property type="term" value="C:extracellular space"/>
    <property type="evidence" value="ECO:0007005"/>
    <property type="project" value="UniProtKB"/>
</dbReference>
<dbReference type="GO" id="GO:0071745">
    <property type="term" value="C:IgA immunoglobulin complex"/>
    <property type="evidence" value="ECO:0000303"/>
    <property type="project" value="ComplexPortal"/>
</dbReference>
<dbReference type="GO" id="GO:0071738">
    <property type="term" value="C:IgD immunoglobulin complex"/>
    <property type="evidence" value="ECO:0000303"/>
    <property type="project" value="ComplexPortal"/>
</dbReference>
<dbReference type="GO" id="GO:0071742">
    <property type="term" value="C:IgE immunoglobulin complex"/>
    <property type="evidence" value="ECO:0000303"/>
    <property type="project" value="ComplexPortal"/>
</dbReference>
<dbReference type="GO" id="GO:0071735">
    <property type="term" value="C:IgG immunoglobulin complex"/>
    <property type="evidence" value="ECO:0000250"/>
    <property type="project" value="ComplexPortal"/>
</dbReference>
<dbReference type="GO" id="GO:0071753">
    <property type="term" value="C:IgM immunoglobulin complex"/>
    <property type="evidence" value="ECO:0000303"/>
    <property type="project" value="ComplexPortal"/>
</dbReference>
<dbReference type="GO" id="GO:0005886">
    <property type="term" value="C:plasma membrane"/>
    <property type="evidence" value="ECO:0000304"/>
    <property type="project" value="Reactome"/>
</dbReference>
<dbReference type="GO" id="GO:0003823">
    <property type="term" value="F:antigen binding"/>
    <property type="evidence" value="ECO:0000318"/>
    <property type="project" value="GO_Central"/>
</dbReference>
<dbReference type="GO" id="GO:0002250">
    <property type="term" value="P:adaptive immune response"/>
    <property type="evidence" value="ECO:0000303"/>
    <property type="project" value="ComplexPortal"/>
</dbReference>
<dbReference type="GO" id="GO:0050853">
    <property type="term" value="P:B cell receptor signaling pathway"/>
    <property type="evidence" value="ECO:0000303"/>
    <property type="project" value="ComplexPortal"/>
</dbReference>
<dbReference type="GO" id="GO:0016064">
    <property type="term" value="P:immunoglobulin mediated immune response"/>
    <property type="evidence" value="ECO:0000318"/>
    <property type="project" value="GO_Central"/>
</dbReference>
<dbReference type="CDD" id="cd07699">
    <property type="entry name" value="IgC1_L"/>
    <property type="match status" value="1"/>
</dbReference>
<dbReference type="FunFam" id="2.60.40.10:FF:000283">
    <property type="entry name" value="Immunoglobulin kappa constant"/>
    <property type="match status" value="1"/>
</dbReference>
<dbReference type="Gene3D" id="2.60.40.10">
    <property type="entry name" value="Immunoglobulins"/>
    <property type="match status" value="1"/>
</dbReference>
<dbReference type="InterPro" id="IPR007110">
    <property type="entry name" value="Ig-like_dom"/>
</dbReference>
<dbReference type="InterPro" id="IPR036179">
    <property type="entry name" value="Ig-like_dom_sf"/>
</dbReference>
<dbReference type="InterPro" id="IPR013783">
    <property type="entry name" value="Ig-like_fold"/>
</dbReference>
<dbReference type="InterPro" id="IPR003006">
    <property type="entry name" value="Ig/MHC_CS"/>
</dbReference>
<dbReference type="InterPro" id="IPR003597">
    <property type="entry name" value="Ig_C1-set"/>
</dbReference>
<dbReference type="InterPro" id="IPR050160">
    <property type="entry name" value="MHC/Immunoglobulin"/>
</dbReference>
<dbReference type="PANTHER" id="PTHR19944:SF98">
    <property type="entry name" value="IG-LIKE DOMAIN-CONTAINING PROTEIN"/>
    <property type="match status" value="1"/>
</dbReference>
<dbReference type="PANTHER" id="PTHR19944">
    <property type="entry name" value="MHC CLASS II-RELATED"/>
    <property type="match status" value="1"/>
</dbReference>
<dbReference type="Pfam" id="PF07654">
    <property type="entry name" value="C1-set"/>
    <property type="match status" value="1"/>
</dbReference>
<dbReference type="SMART" id="SM00407">
    <property type="entry name" value="IGc1"/>
    <property type="match status" value="1"/>
</dbReference>
<dbReference type="SUPFAM" id="SSF48726">
    <property type="entry name" value="Immunoglobulin"/>
    <property type="match status" value="1"/>
</dbReference>
<dbReference type="PROSITE" id="PS50835">
    <property type="entry name" value="IG_LIKE"/>
    <property type="match status" value="1"/>
</dbReference>
<dbReference type="PROSITE" id="PS00290">
    <property type="entry name" value="IG_MHC"/>
    <property type="match status" value="1"/>
</dbReference>
<accession>P0DOY3</accession>
<accession>A0A075B6L0</accession>
<accession>A0M8Q4</accession>
<accession>P0CG05</accession>
<accession>P0CG06</accession>
<accession>P80423</accession>
<proteinExistence type="evidence at protein level"/>
<organism>
    <name type="scientific">Homo sapiens</name>
    <name type="common">Human</name>
    <dbReference type="NCBI Taxonomy" id="9606"/>
    <lineage>
        <taxon>Eukaryota</taxon>
        <taxon>Metazoa</taxon>
        <taxon>Chordata</taxon>
        <taxon>Craniata</taxon>
        <taxon>Vertebrata</taxon>
        <taxon>Euteleostomi</taxon>
        <taxon>Mammalia</taxon>
        <taxon>Eutheria</taxon>
        <taxon>Euarchontoglires</taxon>
        <taxon>Primates</taxon>
        <taxon>Haplorrhini</taxon>
        <taxon>Catarrhini</taxon>
        <taxon>Hominidae</taxon>
        <taxon>Homo</taxon>
    </lineage>
</organism>
<protein>
    <recommendedName>
        <fullName evidence="2 7">Immunoglobulin lambda constant 3</fullName>
    </recommendedName>
    <alternativeName>
        <fullName evidence="10">Ig lambda chain C region DOT</fullName>
    </alternativeName>
    <alternativeName>
        <fullName evidence="9">Ig lambda chain C region NEWM</fullName>
    </alternativeName>
    <alternativeName>
        <fullName evidence="8">Ig lambda-3 chain C regions</fullName>
    </alternativeName>
</protein>
<gene>
    <name evidence="2 7" type="primary">IGLC3</name>
</gene>
<evidence type="ECO:0000255" key="1">
    <source>
        <dbReference type="PROSITE-ProRule" id="PRU00114"/>
    </source>
</evidence>
<evidence type="ECO:0000303" key="2">
    <source>
    </source>
</evidence>
<evidence type="ECO:0000303" key="3">
    <source>
    </source>
</evidence>
<evidence type="ECO:0000303" key="4">
    <source>
    </source>
</evidence>
<evidence type="ECO:0000303" key="5">
    <source>
    </source>
</evidence>
<evidence type="ECO:0000303" key="6">
    <source ref="10"/>
</evidence>
<evidence type="ECO:0000303" key="7">
    <source ref="9"/>
</evidence>
<evidence type="ECO:0000305" key="8"/>
<evidence type="ECO:0000305" key="9">
    <source>
    </source>
</evidence>
<evidence type="ECO:0000305" key="10">
    <source>
    </source>
</evidence>
<evidence type="ECO:0007829" key="11">
    <source>
        <dbReference type="PDB" id="4O5L"/>
    </source>
</evidence>
<reference key="1">
    <citation type="journal article" date="1981" name="Nature">
        <title>Clustered arrangement of immunoglobulin lambda constant region genes in man.</title>
        <authorList>
            <person name="Hieter P.A."/>
            <person name="Hollis G.F."/>
            <person name="Korsmeyer S.J."/>
            <person name="Waldmann T.A."/>
            <person name="Leder P."/>
        </authorList>
    </citation>
    <scope>NUCLEOTIDE SEQUENCE [GENOMIC DNA] (IMGT ALLELE IGLC3*01)</scope>
</reference>
<reference key="2">
    <citation type="journal article" date="1990" name="J. Exp. Med.">
        <title>Structure and expression of the human immunoglobulin lambda genes.</title>
        <authorList>
            <person name="Vasicek T.J."/>
            <person name="Leder P."/>
        </authorList>
    </citation>
    <scope>NUCLEOTIDE SEQUENCE [GENOMIC DNA] (IMGT ALLELE IGLC3*03)</scope>
</reference>
<reference key="3">
    <citation type="journal article" date="1995" name="Eur. J. Biochem.">
        <title>Characterization of the two unique human anti-flavin monoclonal immunoglobulins.</title>
        <authorList>
            <person name="Stoppini M."/>
            <person name="Bellotti V."/>
            <person name="Negri A."/>
            <person name="Merlini G."/>
            <person name="Garver F."/>
            <person name="Ferri G."/>
        </authorList>
    </citation>
    <scope>PROTEIN SEQUENCE</scope>
</reference>
<reference key="4">
    <citation type="journal article" date="1996" name="Mol. Immunol.">
        <title>Recombinant human Fab antibody fragments to HIV-1 Rev and Tat regulatory proteins: direct selection from a combinatorial phage display library.</title>
        <authorList>
            <person name="Pilkington G.R."/>
            <person name="Duan L."/>
            <person name="Zhu M."/>
            <person name="Keil W."/>
            <person name="Pomerantz R.J."/>
        </authorList>
    </citation>
    <scope>NUCLEOTIDE SEQUENCE [MRNA]</scope>
</reference>
<reference key="5">
    <citation type="journal article" date="1997" name="Genome Res.">
        <title>One-megabase sequence analysis of the human immunoglobulin lambda gene locus.</title>
        <authorList>
            <person name="Kawasaki K."/>
            <person name="Minoshima S."/>
            <person name="Nakato E."/>
            <person name="Shibuya K."/>
            <person name="Shintani A."/>
            <person name="Schmeits J.L."/>
            <person name="Wang J."/>
            <person name="Shimizu N."/>
        </authorList>
    </citation>
    <scope>NUCLEOTIDE SEQUENCE [GENOMIC DNA] (IMGT ALLELE IGLC3*04)</scope>
    <scope>VARIANT ARG-83</scope>
</reference>
<reference key="6">
    <citation type="journal article" date="1999" name="Nature">
        <title>The DNA sequence of human chromosome 22.</title>
        <authorList>
            <person name="Dunham I."/>
            <person name="Hunt A.R."/>
            <person name="Collins J.E."/>
            <person name="Bruskiewich R."/>
            <person name="Beare D.M."/>
            <person name="Clamp M."/>
            <person name="Smink L.J."/>
            <person name="Ainscough R."/>
            <person name="Almeida J.P."/>
            <person name="Babbage A.K."/>
            <person name="Bagguley C."/>
            <person name="Bailey J."/>
            <person name="Barlow K.F."/>
            <person name="Bates K.N."/>
            <person name="Beasley O.P."/>
            <person name="Bird C.P."/>
            <person name="Blakey S.E."/>
            <person name="Bridgeman A.M."/>
            <person name="Buck D."/>
            <person name="Burgess J."/>
            <person name="Burrill W.D."/>
            <person name="Burton J."/>
            <person name="Carder C."/>
            <person name="Carter N.P."/>
            <person name="Chen Y."/>
            <person name="Clark G."/>
            <person name="Clegg S.M."/>
            <person name="Cobley V.E."/>
            <person name="Cole C.G."/>
            <person name="Collier R.E."/>
            <person name="Connor R."/>
            <person name="Conroy D."/>
            <person name="Corby N.R."/>
            <person name="Coville G.J."/>
            <person name="Cox A.V."/>
            <person name="Davis J."/>
            <person name="Dawson E."/>
            <person name="Dhami P.D."/>
            <person name="Dockree C."/>
            <person name="Dodsworth S.J."/>
            <person name="Durbin R.M."/>
            <person name="Ellington A.G."/>
            <person name="Evans K.L."/>
            <person name="Fey J.M."/>
            <person name="Fleming K."/>
            <person name="French L."/>
            <person name="Garner A.A."/>
            <person name="Gilbert J.G.R."/>
            <person name="Goward M.E."/>
            <person name="Grafham D.V."/>
            <person name="Griffiths M.N.D."/>
            <person name="Hall C."/>
            <person name="Hall R.E."/>
            <person name="Hall-Tamlyn G."/>
            <person name="Heathcott R.W."/>
            <person name="Ho S."/>
            <person name="Holmes S."/>
            <person name="Hunt S.E."/>
            <person name="Jones M.C."/>
            <person name="Kershaw J."/>
            <person name="Kimberley A.M."/>
            <person name="King A."/>
            <person name="Laird G.K."/>
            <person name="Langford C.F."/>
            <person name="Leversha M.A."/>
            <person name="Lloyd C."/>
            <person name="Lloyd D.M."/>
            <person name="Martyn I.D."/>
            <person name="Mashreghi-Mohammadi M."/>
            <person name="Matthews L.H."/>
            <person name="Mccann O.T."/>
            <person name="Mcclay J."/>
            <person name="Mclaren S."/>
            <person name="McMurray A.A."/>
            <person name="Milne S.A."/>
            <person name="Mortimore B.J."/>
            <person name="Odell C.N."/>
            <person name="Pavitt R."/>
            <person name="Pearce A.V."/>
            <person name="Pearson D."/>
            <person name="Phillimore B.J.C.T."/>
            <person name="Phillips S.H."/>
            <person name="Plumb R.W."/>
            <person name="Ramsay H."/>
            <person name="Ramsey Y."/>
            <person name="Rogers L."/>
            <person name="Ross M.T."/>
            <person name="Scott C.E."/>
            <person name="Sehra H.K."/>
            <person name="Skuce C.D."/>
            <person name="Smalley S."/>
            <person name="Smith M.L."/>
            <person name="Soderlund C."/>
            <person name="Spragon L."/>
            <person name="Steward C.A."/>
            <person name="Sulston J.E."/>
            <person name="Swann R.M."/>
            <person name="Vaudin M."/>
            <person name="Wall M."/>
            <person name="Wallis J.M."/>
            <person name="Whiteley M.N."/>
            <person name="Willey D.L."/>
            <person name="Williams L."/>
            <person name="Williams S.A."/>
            <person name="Williamson H."/>
            <person name="Wilmer T.E."/>
            <person name="Wilming L."/>
            <person name="Wright C.L."/>
            <person name="Hubbard T."/>
            <person name="Bentley D.R."/>
            <person name="Beck S."/>
            <person name="Rogers J."/>
            <person name="Shimizu N."/>
            <person name="Minoshima S."/>
            <person name="Kawasaki K."/>
            <person name="Sasaki T."/>
            <person name="Asakawa S."/>
            <person name="Kudoh J."/>
            <person name="Shintani A."/>
            <person name="Shibuya K."/>
            <person name="Yoshizaki Y."/>
            <person name="Aoki N."/>
            <person name="Mitsuyama S."/>
            <person name="Roe B.A."/>
            <person name="Chen F."/>
            <person name="Chu L."/>
            <person name="Crabtree J."/>
            <person name="Deschamps S."/>
            <person name="Do A."/>
            <person name="Do T."/>
            <person name="Dorman A."/>
            <person name="Fang F."/>
            <person name="Fu Y."/>
            <person name="Hu P."/>
            <person name="Hua A."/>
            <person name="Kenton S."/>
            <person name="Lai H."/>
            <person name="Lao H.I."/>
            <person name="Lewis J."/>
            <person name="Lewis S."/>
            <person name="Lin S.-P."/>
            <person name="Loh P."/>
            <person name="Malaj E."/>
            <person name="Nguyen T."/>
            <person name="Pan H."/>
            <person name="Phan S."/>
            <person name="Qi S."/>
            <person name="Qian Y."/>
            <person name="Ray L."/>
            <person name="Ren Q."/>
            <person name="Shaull S."/>
            <person name="Sloan D."/>
            <person name="Song L."/>
            <person name="Wang Q."/>
            <person name="Wang Y."/>
            <person name="Wang Z."/>
            <person name="White J."/>
            <person name="Willingham D."/>
            <person name="Wu H."/>
            <person name="Yao Z."/>
            <person name="Zhan M."/>
            <person name="Zhang G."/>
            <person name="Chissoe S."/>
            <person name="Murray J."/>
            <person name="Miller N."/>
            <person name="Minx P."/>
            <person name="Fulton R."/>
            <person name="Johnson D."/>
            <person name="Bemis G."/>
            <person name="Bentley D."/>
            <person name="Bradshaw H."/>
            <person name="Bourne S."/>
            <person name="Cordes M."/>
            <person name="Du Z."/>
            <person name="Fulton L."/>
            <person name="Goela D."/>
            <person name="Graves T."/>
            <person name="Hawkins J."/>
            <person name="Hinds K."/>
            <person name="Kemp K."/>
            <person name="Latreille P."/>
            <person name="Layman D."/>
            <person name="Ozersky P."/>
            <person name="Rohlfing T."/>
            <person name="Scheet P."/>
            <person name="Walker C."/>
            <person name="Wamsley A."/>
            <person name="Wohldmann P."/>
            <person name="Pepin K."/>
            <person name="Nelson J."/>
            <person name="Korf I."/>
            <person name="Bedell J.A."/>
            <person name="Hillier L.W."/>
            <person name="Mardis E."/>
            <person name="Waterston R."/>
            <person name="Wilson R."/>
            <person name="Emanuel B.S."/>
            <person name="Shaikh T."/>
            <person name="Kurahashi H."/>
            <person name="Saitta S."/>
            <person name="Budarf M.L."/>
            <person name="McDermid H.E."/>
            <person name="Johnson A."/>
            <person name="Wong A.C.C."/>
            <person name="Morrow B.E."/>
            <person name="Edelmann L."/>
            <person name="Kim U.J."/>
            <person name="Shizuya H."/>
            <person name="Simon M.I."/>
            <person name="Dumanski J.P."/>
            <person name="Peyrard M."/>
            <person name="Kedra D."/>
            <person name="Seroussi E."/>
            <person name="Fransson I."/>
            <person name="Tapia I."/>
            <person name="Bruder C.E."/>
            <person name="O'Brien K.P."/>
            <person name="Wilkinson P."/>
            <person name="Bodenteich A."/>
            <person name="Hartman K."/>
            <person name="Hu X."/>
            <person name="Khan A.S."/>
            <person name="Lane L."/>
            <person name="Tilahun Y."/>
            <person name="Wright H."/>
        </authorList>
    </citation>
    <scope>NUCLEOTIDE SEQUENCE [LARGE SCALE GENOMIC DNA] (IMGT ALLELE IGLC3*03)</scope>
</reference>
<reference key="7">
    <citation type="journal article" date="1974" name="Biochemistry">
        <title>Amino acid sequence of the (lambda) light chain of a human myeloma immunoglobulin (IgG New).</title>
        <authorList>
            <person name="Chen B.L."/>
            <person name="Poljak R.J."/>
        </authorList>
    </citation>
    <scope>PARTIAL PROTEIN SEQUENCE</scope>
</reference>
<reference key="8">
    <citation type="journal article" date="2001" name="Exp. Clin. Immunogenet.">
        <title>Nomenclature of the human immunoglobulin lambda (IGL) genes.</title>
        <authorList>
            <person name="Lefranc M.P."/>
        </authorList>
    </citation>
    <scope>NOMENCLATURE</scope>
</reference>
<reference key="9">
    <citation type="book" date="2001" name="The Immunoglobulin FactsBook.">
        <title>The Immunoglobulin FactsBook.</title>
        <editorList>
            <person name="Lefranc M.P."/>
            <person name="Lefranc G."/>
        </editorList>
        <authorList>
            <person name="Lefranc M.P."/>
            <person name="Lefranc G."/>
        </authorList>
    </citation>
    <scope>NOMENCLATURE</scope>
</reference>
<reference key="10">
    <citation type="book" date="2004" name="Molecular Biology of B Cells">
        <title>Immunoglobulin lambda (IGL) genes of human and mouse.</title>
        <editorList>
            <person name="Honjo T."/>
            <person name="Alt F.W."/>
            <person name="Neuberger M."/>
        </editorList>
        <authorList>
            <person name="Lefranc M.-P."/>
            <person name="Lefranc G."/>
        </authorList>
    </citation>
    <scope>SEROLOGICAL ISOTYPE</scope>
</reference>
<reference key="11">
    <citation type="journal article" date="2007" name="Annu. Rev. Genet.">
        <title>Immunoglobulin somatic hypermutation.</title>
        <authorList>
            <person name="Teng G."/>
            <person name="Papavasiliou F.N."/>
        </authorList>
    </citation>
    <scope>REVIEW ON SOMATIC HYPERMUTATION</scope>
</reference>
<reference key="12">
    <citation type="journal article" date="2010" name="J. Allergy Clin. Immunol.">
        <title>Structure and function of immunoglobulins.</title>
        <authorList>
            <person name="Schroeder H.W. Jr."/>
            <person name="Cavacini L."/>
        </authorList>
    </citation>
    <scope>REVIEW ON IMMUNOGLOBULINS</scope>
</reference>
<reference key="13">
    <citation type="journal article" date="2012" name="Nat. Rev. Immunol.">
        <title>Molecular programming of B cell memory.</title>
        <authorList>
            <person name="McHeyzer-Williams M."/>
            <person name="Okitsu S."/>
            <person name="Wang N."/>
            <person name="McHeyzer-Williams L."/>
        </authorList>
    </citation>
    <scope>REVIEW ON FUNCTION</scope>
</reference>
<reference key="14">
    <citation type="journal article" date="1974" name="Proc. Natl. Acad. Sci. U.S.A.">
        <title>The three-dimensional structure of the fab' fragment of a human myeloma immunoglobulin at 2.0-A resolution.</title>
        <authorList>
            <person name="Poljak R.J."/>
            <person name="Amzel L.M."/>
            <person name="Avey H.P."/>
            <person name="Chen B.L."/>
            <person name="Phizackerley R.P."/>
            <person name="Saul F."/>
        </authorList>
    </citation>
    <scope>X-RAY CRYSTALLOGRAPHY (2.0 ANGSTROMS)</scope>
</reference>